<dbReference type="EC" id="2.3.1.-"/>
<dbReference type="EMBL" id="AL132976">
    <property type="protein sequence ID" value="CAB62307.1"/>
    <property type="molecule type" value="Genomic_DNA"/>
</dbReference>
<dbReference type="EMBL" id="CP002686">
    <property type="protein sequence ID" value="AEE78648.1"/>
    <property type="molecule type" value="Genomic_DNA"/>
</dbReference>
<dbReference type="PIR" id="T45574">
    <property type="entry name" value="T45574"/>
</dbReference>
<dbReference type="RefSeq" id="NP_190597.1">
    <property type="nucleotide sequence ID" value="NM_114888.2"/>
</dbReference>
<dbReference type="SMR" id="Q9SND9"/>
<dbReference type="FunCoup" id="Q9SND9">
    <property type="interactions" value="25"/>
</dbReference>
<dbReference type="STRING" id="3702.Q9SND9"/>
<dbReference type="iPTMnet" id="Q9SND9"/>
<dbReference type="PaxDb" id="3702-AT3G50280.1"/>
<dbReference type="ProteomicsDB" id="232358"/>
<dbReference type="EnsemblPlants" id="AT3G50280.1">
    <property type="protein sequence ID" value="AT3G50280.1"/>
    <property type="gene ID" value="AT3G50280"/>
</dbReference>
<dbReference type="GeneID" id="824190"/>
<dbReference type="Gramene" id="AT3G50280.1">
    <property type="protein sequence ID" value="AT3G50280.1"/>
    <property type="gene ID" value="AT3G50280"/>
</dbReference>
<dbReference type="KEGG" id="ath:AT3G50280"/>
<dbReference type="Araport" id="AT3G50280"/>
<dbReference type="TAIR" id="AT3G50280"/>
<dbReference type="eggNOG" id="ENOG502QVP8">
    <property type="taxonomic scope" value="Eukaryota"/>
</dbReference>
<dbReference type="HOGENOM" id="CLU_014546_3_0_1"/>
<dbReference type="InParanoid" id="Q9SND9"/>
<dbReference type="OMA" id="DFMSHFF"/>
<dbReference type="PhylomeDB" id="Q9SND9"/>
<dbReference type="BioCyc" id="ARA:AT3G50280-MONOMER"/>
<dbReference type="PRO" id="PR:Q9SND9"/>
<dbReference type="Proteomes" id="UP000006548">
    <property type="component" value="Chromosome 3"/>
</dbReference>
<dbReference type="ExpressionAtlas" id="Q9SND9">
    <property type="expression patterns" value="baseline and differential"/>
</dbReference>
<dbReference type="GO" id="GO:0016746">
    <property type="term" value="F:acyltransferase activity"/>
    <property type="evidence" value="ECO:0007669"/>
    <property type="project" value="UniProtKB-KW"/>
</dbReference>
<dbReference type="Gene3D" id="3.30.559.10">
    <property type="entry name" value="Chloramphenicol acetyltransferase-like domain"/>
    <property type="match status" value="2"/>
</dbReference>
<dbReference type="InterPro" id="IPR023213">
    <property type="entry name" value="CAT-like_dom_sf"/>
</dbReference>
<dbReference type="InterPro" id="IPR051283">
    <property type="entry name" value="Sec_Metabolite_Acyltrans"/>
</dbReference>
<dbReference type="PANTHER" id="PTHR31896">
    <property type="entry name" value="FAMILY REGULATORY PROTEIN, PUTATIVE (AFU_ORTHOLOGUE AFUA_3G14730)-RELATED"/>
    <property type="match status" value="1"/>
</dbReference>
<dbReference type="PANTHER" id="PTHR31896:SF31">
    <property type="entry name" value="HXXXD-TYPE ACYL-TRANSFERASE FAMILY PROTEIN"/>
    <property type="match status" value="1"/>
</dbReference>
<dbReference type="Pfam" id="PF02458">
    <property type="entry name" value="Transferase"/>
    <property type="match status" value="1"/>
</dbReference>
<name>Y3028_ARATH</name>
<proteinExistence type="inferred from homology"/>
<reference key="1">
    <citation type="journal article" date="2000" name="Nature">
        <title>Sequence and analysis of chromosome 3 of the plant Arabidopsis thaliana.</title>
        <authorList>
            <person name="Salanoubat M."/>
            <person name="Lemcke K."/>
            <person name="Rieger M."/>
            <person name="Ansorge W."/>
            <person name="Unseld M."/>
            <person name="Fartmann B."/>
            <person name="Valle G."/>
            <person name="Bloecker H."/>
            <person name="Perez-Alonso M."/>
            <person name="Obermaier B."/>
            <person name="Delseny M."/>
            <person name="Boutry M."/>
            <person name="Grivell L.A."/>
            <person name="Mache R."/>
            <person name="Puigdomenech P."/>
            <person name="De Simone V."/>
            <person name="Choisne N."/>
            <person name="Artiguenave F."/>
            <person name="Robert C."/>
            <person name="Brottier P."/>
            <person name="Wincker P."/>
            <person name="Cattolico L."/>
            <person name="Weissenbach J."/>
            <person name="Saurin W."/>
            <person name="Quetier F."/>
            <person name="Schaefer M."/>
            <person name="Mueller-Auer S."/>
            <person name="Gabel C."/>
            <person name="Fuchs M."/>
            <person name="Benes V."/>
            <person name="Wurmbach E."/>
            <person name="Drzonek H."/>
            <person name="Erfle H."/>
            <person name="Jordan N."/>
            <person name="Bangert S."/>
            <person name="Wiedelmann R."/>
            <person name="Kranz H."/>
            <person name="Voss H."/>
            <person name="Holland R."/>
            <person name="Brandt P."/>
            <person name="Nyakatura G."/>
            <person name="Vezzi A."/>
            <person name="D'Angelo M."/>
            <person name="Pallavicini A."/>
            <person name="Toppo S."/>
            <person name="Simionati B."/>
            <person name="Conrad A."/>
            <person name="Hornischer K."/>
            <person name="Kauer G."/>
            <person name="Loehnert T.-H."/>
            <person name="Nordsiek G."/>
            <person name="Reichelt J."/>
            <person name="Scharfe M."/>
            <person name="Schoen O."/>
            <person name="Bargues M."/>
            <person name="Terol J."/>
            <person name="Climent J."/>
            <person name="Navarro P."/>
            <person name="Collado C."/>
            <person name="Perez-Perez A."/>
            <person name="Ottenwaelder B."/>
            <person name="Duchemin D."/>
            <person name="Cooke R."/>
            <person name="Laudie M."/>
            <person name="Berger-Llauro C."/>
            <person name="Purnelle B."/>
            <person name="Masuy D."/>
            <person name="de Haan M."/>
            <person name="Maarse A.C."/>
            <person name="Alcaraz J.-P."/>
            <person name="Cottet A."/>
            <person name="Casacuberta E."/>
            <person name="Monfort A."/>
            <person name="Argiriou A."/>
            <person name="Flores M."/>
            <person name="Liguori R."/>
            <person name="Vitale D."/>
            <person name="Mannhaupt G."/>
            <person name="Haase D."/>
            <person name="Schoof H."/>
            <person name="Rudd S."/>
            <person name="Zaccaria P."/>
            <person name="Mewes H.-W."/>
            <person name="Mayer K.F.X."/>
            <person name="Kaul S."/>
            <person name="Town C.D."/>
            <person name="Koo H.L."/>
            <person name="Tallon L.J."/>
            <person name="Jenkins J."/>
            <person name="Rooney T."/>
            <person name="Rizzo M."/>
            <person name="Walts A."/>
            <person name="Utterback T."/>
            <person name="Fujii C.Y."/>
            <person name="Shea T.P."/>
            <person name="Creasy T.H."/>
            <person name="Haas B."/>
            <person name="Maiti R."/>
            <person name="Wu D."/>
            <person name="Peterson J."/>
            <person name="Van Aken S."/>
            <person name="Pai G."/>
            <person name="Militscher J."/>
            <person name="Sellers P."/>
            <person name="Gill J.E."/>
            <person name="Feldblyum T.V."/>
            <person name="Preuss D."/>
            <person name="Lin X."/>
            <person name="Nierman W.C."/>
            <person name="Salzberg S.L."/>
            <person name="White O."/>
            <person name="Venter J.C."/>
            <person name="Fraser C.M."/>
            <person name="Kaneko T."/>
            <person name="Nakamura Y."/>
            <person name="Sato S."/>
            <person name="Kato T."/>
            <person name="Asamizu E."/>
            <person name="Sasamoto S."/>
            <person name="Kimura T."/>
            <person name="Idesawa K."/>
            <person name="Kawashima K."/>
            <person name="Kishida Y."/>
            <person name="Kiyokawa C."/>
            <person name="Kohara M."/>
            <person name="Matsumoto M."/>
            <person name="Matsuno A."/>
            <person name="Muraki A."/>
            <person name="Nakayama S."/>
            <person name="Nakazaki N."/>
            <person name="Shinpo S."/>
            <person name="Takeuchi C."/>
            <person name="Wada T."/>
            <person name="Watanabe A."/>
            <person name="Yamada M."/>
            <person name="Yasuda M."/>
            <person name="Tabata S."/>
        </authorList>
    </citation>
    <scope>NUCLEOTIDE SEQUENCE [LARGE SCALE GENOMIC DNA]</scope>
    <source>
        <strain>cv. Columbia</strain>
    </source>
</reference>
<reference key="2">
    <citation type="journal article" date="2017" name="Plant J.">
        <title>Araport11: a complete reannotation of the Arabidopsis thaliana reference genome.</title>
        <authorList>
            <person name="Cheng C.Y."/>
            <person name="Krishnakumar V."/>
            <person name="Chan A.P."/>
            <person name="Thibaud-Nissen F."/>
            <person name="Schobel S."/>
            <person name="Town C.D."/>
        </authorList>
    </citation>
    <scope>GENOME REANNOTATION</scope>
    <source>
        <strain>cv. Columbia</strain>
    </source>
</reference>
<evidence type="ECO:0000255" key="1"/>
<evidence type="ECO:0000305" key="2"/>
<keyword id="KW-0012">Acyltransferase</keyword>
<keyword id="KW-1185">Reference proteome</keyword>
<keyword id="KW-0808">Transferase</keyword>
<accession>Q9SND9</accession>
<gene>
    <name type="ordered locus">At3g50280</name>
    <name type="ORF">F11C1.120</name>
</gene>
<comment type="similarity">
    <text evidence="2">Belongs to the plant acyltransferase family.</text>
</comment>
<sequence length="443" mass="49960">MADVTFISSSIVRPQIINQEGREKIHLTPFDLNLLYVDYTQRGLLFPKPDPETHFISRLRTSLSSALDIYFPFAGRLNKVENHEDETVSFYINCDGSGAKFIHAVSDSVSVSDLLRPDGSVPDFFRIFYPMNGVKSIDGLSEPLLALQVTEMRDGVFIGFGYNHMVADGASIWNFFRTWSKICSNGQRENLQPLALKGLFVDGMDFPIHIPVSDTETSPPSRELSPTFKERVFHFTKRNISDLKAKVNGEIGLRDHKVSSLQAVSAHMWRSIIRHSGLNQEEKTRCFVAVDLRQRLNPPLDKECFGHVIYNSVVTTTVGELHDQGLGWAFLQINNMLRSLTNEDYRIYAENWVRNMKIQKSGLGSKMTRDSVIVSSSPRFEVYDNDFGWGKPIAVRAGPSNSISGKLVFFRGIEEGCIDVHAFLLPDVLVKLLADVEFLEKCG</sequence>
<feature type="chain" id="PRO_0000326468" description="Uncharacterized acetyltransferase At3g50280">
    <location>
        <begin position="1"/>
        <end position="443"/>
    </location>
</feature>
<feature type="active site" description="Proton acceptor" evidence="1">
    <location>
        <position position="164"/>
    </location>
</feature>
<feature type="active site" description="Proton acceptor" evidence="1">
    <location>
        <position position="386"/>
    </location>
</feature>
<protein>
    <recommendedName>
        <fullName>Uncharacterized acetyltransferase At3g50280</fullName>
        <ecNumber>2.3.1.-</ecNumber>
    </recommendedName>
</protein>
<organism>
    <name type="scientific">Arabidopsis thaliana</name>
    <name type="common">Mouse-ear cress</name>
    <dbReference type="NCBI Taxonomy" id="3702"/>
    <lineage>
        <taxon>Eukaryota</taxon>
        <taxon>Viridiplantae</taxon>
        <taxon>Streptophyta</taxon>
        <taxon>Embryophyta</taxon>
        <taxon>Tracheophyta</taxon>
        <taxon>Spermatophyta</taxon>
        <taxon>Magnoliopsida</taxon>
        <taxon>eudicotyledons</taxon>
        <taxon>Gunneridae</taxon>
        <taxon>Pentapetalae</taxon>
        <taxon>rosids</taxon>
        <taxon>malvids</taxon>
        <taxon>Brassicales</taxon>
        <taxon>Brassicaceae</taxon>
        <taxon>Camelineae</taxon>
        <taxon>Arabidopsis</taxon>
    </lineage>
</organism>